<accession>Q88V14</accession>
<accession>F9UQJ2</accession>
<evidence type="ECO:0000255" key="1">
    <source>
        <dbReference type="HAMAP-Rule" id="MF_01448"/>
    </source>
</evidence>
<sequence length="98" mass="11102">MSQNQDRKDNDVITLVDDEGNETLFNILFTFDSEDFGHSYILLYPADAAADDEVDIQAYIFNPEDGDNGELQLIESDDEWDMVEQVLNTFLADDGGMQ</sequence>
<protein>
    <recommendedName>
        <fullName evidence="1">UPF0473 protein lp_2273</fullName>
    </recommendedName>
</protein>
<reference key="1">
    <citation type="journal article" date="2003" name="Proc. Natl. Acad. Sci. U.S.A.">
        <title>Complete genome sequence of Lactobacillus plantarum WCFS1.</title>
        <authorList>
            <person name="Kleerebezem M."/>
            <person name="Boekhorst J."/>
            <person name="van Kranenburg R."/>
            <person name="Molenaar D."/>
            <person name="Kuipers O.P."/>
            <person name="Leer R."/>
            <person name="Tarchini R."/>
            <person name="Peters S.A."/>
            <person name="Sandbrink H.M."/>
            <person name="Fiers M.W.E.J."/>
            <person name="Stiekema W."/>
            <person name="Klein Lankhorst R.M."/>
            <person name="Bron P.A."/>
            <person name="Hoffer S.M."/>
            <person name="Nierop Groot M.N."/>
            <person name="Kerkhoven R."/>
            <person name="De Vries M."/>
            <person name="Ursing B."/>
            <person name="De Vos W.M."/>
            <person name="Siezen R.J."/>
        </authorList>
    </citation>
    <scope>NUCLEOTIDE SEQUENCE [LARGE SCALE GENOMIC DNA]</scope>
    <source>
        <strain>ATCC BAA-793 / NCIMB 8826 / WCFS1</strain>
    </source>
</reference>
<reference key="2">
    <citation type="journal article" date="2012" name="J. Bacteriol.">
        <title>Complete resequencing and reannotation of the Lactobacillus plantarum WCFS1 genome.</title>
        <authorList>
            <person name="Siezen R.J."/>
            <person name="Francke C."/>
            <person name="Renckens B."/>
            <person name="Boekhorst J."/>
            <person name="Wels M."/>
            <person name="Kleerebezem M."/>
            <person name="van Hijum S.A."/>
        </authorList>
    </citation>
    <scope>NUCLEOTIDE SEQUENCE [LARGE SCALE GENOMIC DNA]</scope>
    <scope>GENOME REANNOTATION</scope>
    <source>
        <strain>ATCC BAA-793 / NCIMB 8826 / WCFS1</strain>
    </source>
</reference>
<keyword id="KW-1185">Reference proteome</keyword>
<gene>
    <name type="ordered locus">lp_2273</name>
</gene>
<organism>
    <name type="scientific">Lactiplantibacillus plantarum (strain ATCC BAA-793 / NCIMB 8826 / WCFS1)</name>
    <name type="common">Lactobacillus plantarum</name>
    <dbReference type="NCBI Taxonomy" id="220668"/>
    <lineage>
        <taxon>Bacteria</taxon>
        <taxon>Bacillati</taxon>
        <taxon>Bacillota</taxon>
        <taxon>Bacilli</taxon>
        <taxon>Lactobacillales</taxon>
        <taxon>Lactobacillaceae</taxon>
        <taxon>Lactiplantibacillus</taxon>
    </lineage>
</organism>
<feature type="chain" id="PRO_0000304839" description="UPF0473 protein lp_2273">
    <location>
        <begin position="1"/>
        <end position="98"/>
    </location>
</feature>
<proteinExistence type="inferred from homology"/>
<dbReference type="EMBL" id="AL935263">
    <property type="protein sequence ID" value="CCC79481.1"/>
    <property type="molecule type" value="Genomic_DNA"/>
</dbReference>
<dbReference type="RefSeq" id="WP_003641525.1">
    <property type="nucleotide sequence ID" value="NC_004567.2"/>
</dbReference>
<dbReference type="RefSeq" id="YP_004889995.1">
    <property type="nucleotide sequence ID" value="NC_004567.2"/>
</dbReference>
<dbReference type="SMR" id="Q88V14"/>
<dbReference type="STRING" id="220668.lp_2273"/>
<dbReference type="EnsemblBacteria" id="CCC79481">
    <property type="protein sequence ID" value="CCC79481"/>
    <property type="gene ID" value="lp_2273"/>
</dbReference>
<dbReference type="KEGG" id="lpl:lp_2273"/>
<dbReference type="PATRIC" id="fig|220668.9.peg.1924"/>
<dbReference type="eggNOG" id="COG3906">
    <property type="taxonomic scope" value="Bacteria"/>
</dbReference>
<dbReference type="HOGENOM" id="CLU_146610_2_1_9"/>
<dbReference type="OrthoDB" id="2086132at2"/>
<dbReference type="PhylomeDB" id="Q88V14"/>
<dbReference type="Proteomes" id="UP000000432">
    <property type="component" value="Chromosome"/>
</dbReference>
<dbReference type="HAMAP" id="MF_01448">
    <property type="entry name" value="UPF0473"/>
    <property type="match status" value="1"/>
</dbReference>
<dbReference type="InterPro" id="IPR009711">
    <property type="entry name" value="UPF0473"/>
</dbReference>
<dbReference type="NCBIfam" id="NF010215">
    <property type="entry name" value="PRK13678.1-2"/>
    <property type="match status" value="1"/>
</dbReference>
<dbReference type="NCBIfam" id="NF010217">
    <property type="entry name" value="PRK13678.1-4"/>
    <property type="match status" value="1"/>
</dbReference>
<dbReference type="PANTHER" id="PTHR40066">
    <property type="entry name" value="UPF0473 PROTEIN CBO2561/CLC_2432"/>
    <property type="match status" value="1"/>
</dbReference>
<dbReference type="PANTHER" id="PTHR40066:SF1">
    <property type="entry name" value="UPF0473 PROTEIN CBO2561_CLC_2432"/>
    <property type="match status" value="1"/>
</dbReference>
<dbReference type="Pfam" id="PF06949">
    <property type="entry name" value="DUF1292"/>
    <property type="match status" value="1"/>
</dbReference>
<name>Y2273_LACPL</name>
<comment type="similarity">
    <text evidence="1">Belongs to the UPF0473 family.</text>
</comment>